<feature type="chain" id="PRO_1000129920" description="Cell division protein FtsB">
    <location>
        <begin position="1"/>
        <end position="94"/>
    </location>
</feature>
<feature type="topological domain" description="Cytoplasmic" evidence="1">
    <location>
        <begin position="1"/>
        <end position="3"/>
    </location>
</feature>
<feature type="transmembrane region" description="Helical" evidence="1">
    <location>
        <begin position="4"/>
        <end position="21"/>
    </location>
</feature>
<feature type="topological domain" description="Periplasmic" evidence="1">
    <location>
        <begin position="22"/>
        <end position="94"/>
    </location>
</feature>
<feature type="coiled-coil region" evidence="1">
    <location>
        <begin position="40"/>
        <end position="60"/>
    </location>
</feature>
<evidence type="ECO:0000255" key="1">
    <source>
        <dbReference type="HAMAP-Rule" id="MF_00599"/>
    </source>
</evidence>
<sequence length="94" mass="10881">MRAFAVLLIIALGWLQYTLWFGKNGMEDYAQVSNDVQLQEEVNQGLRNRNGQMFAEIDDLRKGSAAIEERARHELGMIKKGETFYRIIDENSEE</sequence>
<reference key="1">
    <citation type="journal article" date="2008" name="BMC Genomics">
        <title>The genome sequence of the fish pathogen Aliivibrio salmonicida strain LFI1238 shows extensive evidence of gene decay.</title>
        <authorList>
            <person name="Hjerde E."/>
            <person name="Lorentzen M.S."/>
            <person name="Holden M.T."/>
            <person name="Seeger K."/>
            <person name="Paulsen S."/>
            <person name="Bason N."/>
            <person name="Churcher C."/>
            <person name="Harris D."/>
            <person name="Norbertczak H."/>
            <person name="Quail M.A."/>
            <person name="Sanders S."/>
            <person name="Thurston S."/>
            <person name="Parkhill J."/>
            <person name="Willassen N.P."/>
            <person name="Thomson N.R."/>
        </authorList>
    </citation>
    <scope>NUCLEOTIDE SEQUENCE [LARGE SCALE GENOMIC DNA]</scope>
    <source>
        <strain>LFI1238</strain>
    </source>
</reference>
<gene>
    <name evidence="1" type="primary">ftsB</name>
    <name type="ordered locus">VSAL_I2513</name>
</gene>
<dbReference type="EMBL" id="FM178379">
    <property type="protein sequence ID" value="CAQ80197.1"/>
    <property type="molecule type" value="Genomic_DNA"/>
</dbReference>
<dbReference type="RefSeq" id="WP_012550985.1">
    <property type="nucleotide sequence ID" value="NC_011312.1"/>
</dbReference>
<dbReference type="SMR" id="B6EKL7"/>
<dbReference type="KEGG" id="vsa:VSAL_I2513"/>
<dbReference type="eggNOG" id="COG2919">
    <property type="taxonomic scope" value="Bacteria"/>
</dbReference>
<dbReference type="HOGENOM" id="CLU_134863_5_2_6"/>
<dbReference type="Proteomes" id="UP000001730">
    <property type="component" value="Chromosome 1"/>
</dbReference>
<dbReference type="GO" id="GO:0032153">
    <property type="term" value="C:cell division site"/>
    <property type="evidence" value="ECO:0007669"/>
    <property type="project" value="UniProtKB-UniRule"/>
</dbReference>
<dbReference type="GO" id="GO:0030428">
    <property type="term" value="C:cell septum"/>
    <property type="evidence" value="ECO:0007669"/>
    <property type="project" value="TreeGrafter"/>
</dbReference>
<dbReference type="GO" id="GO:0005886">
    <property type="term" value="C:plasma membrane"/>
    <property type="evidence" value="ECO:0007669"/>
    <property type="project" value="UniProtKB-SubCell"/>
</dbReference>
<dbReference type="GO" id="GO:0043093">
    <property type="term" value="P:FtsZ-dependent cytokinesis"/>
    <property type="evidence" value="ECO:0007669"/>
    <property type="project" value="UniProtKB-UniRule"/>
</dbReference>
<dbReference type="HAMAP" id="MF_00599">
    <property type="entry name" value="FtsB"/>
    <property type="match status" value="1"/>
</dbReference>
<dbReference type="InterPro" id="IPR023081">
    <property type="entry name" value="Cell_div_FtsB"/>
</dbReference>
<dbReference type="InterPro" id="IPR007060">
    <property type="entry name" value="FtsL/DivIC"/>
</dbReference>
<dbReference type="NCBIfam" id="NF002058">
    <property type="entry name" value="PRK00888.1"/>
    <property type="match status" value="1"/>
</dbReference>
<dbReference type="PANTHER" id="PTHR37485">
    <property type="entry name" value="CELL DIVISION PROTEIN FTSB"/>
    <property type="match status" value="1"/>
</dbReference>
<dbReference type="PANTHER" id="PTHR37485:SF1">
    <property type="entry name" value="CELL DIVISION PROTEIN FTSB"/>
    <property type="match status" value="1"/>
</dbReference>
<dbReference type="Pfam" id="PF04977">
    <property type="entry name" value="DivIC"/>
    <property type="match status" value="1"/>
</dbReference>
<comment type="function">
    <text evidence="1">Essential cell division protein. May link together the upstream cell division proteins, which are predominantly cytoplasmic, with the downstream cell division proteins, which are predominantly periplasmic.</text>
</comment>
<comment type="subunit">
    <text evidence="1">Part of a complex composed of FtsB, FtsL and FtsQ.</text>
</comment>
<comment type="subcellular location">
    <subcellularLocation>
        <location evidence="1">Cell inner membrane</location>
        <topology evidence="1">Single-pass type II membrane protein</topology>
    </subcellularLocation>
    <text evidence="1">Localizes to the division septum.</text>
</comment>
<comment type="similarity">
    <text evidence="1">Belongs to the FtsB family.</text>
</comment>
<name>FTSB_ALISL</name>
<accession>B6EKL7</accession>
<proteinExistence type="inferred from homology"/>
<organism>
    <name type="scientific">Aliivibrio salmonicida (strain LFI1238)</name>
    <name type="common">Vibrio salmonicida (strain LFI1238)</name>
    <dbReference type="NCBI Taxonomy" id="316275"/>
    <lineage>
        <taxon>Bacteria</taxon>
        <taxon>Pseudomonadati</taxon>
        <taxon>Pseudomonadota</taxon>
        <taxon>Gammaproteobacteria</taxon>
        <taxon>Vibrionales</taxon>
        <taxon>Vibrionaceae</taxon>
        <taxon>Aliivibrio</taxon>
    </lineage>
</organism>
<keyword id="KW-0131">Cell cycle</keyword>
<keyword id="KW-0132">Cell division</keyword>
<keyword id="KW-0997">Cell inner membrane</keyword>
<keyword id="KW-1003">Cell membrane</keyword>
<keyword id="KW-0175">Coiled coil</keyword>
<keyword id="KW-0472">Membrane</keyword>
<keyword id="KW-0812">Transmembrane</keyword>
<keyword id="KW-1133">Transmembrane helix</keyword>
<protein>
    <recommendedName>
        <fullName evidence="1">Cell division protein FtsB</fullName>
    </recommendedName>
</protein>